<accession>Q89PT3</accession>
<dbReference type="EC" id="3.5.5.7"/>
<dbReference type="EMBL" id="BA000040">
    <property type="protein sequence ID" value="BAC48662.1"/>
    <property type="molecule type" value="Genomic_DNA"/>
</dbReference>
<dbReference type="RefSeq" id="NP_770037.1">
    <property type="nucleotide sequence ID" value="NC_004463.1"/>
</dbReference>
<dbReference type="RefSeq" id="WP_011086181.1">
    <property type="nucleotide sequence ID" value="NC_004463.1"/>
</dbReference>
<dbReference type="SMR" id="Q89PT3"/>
<dbReference type="STRING" id="224911.AAV28_14015"/>
<dbReference type="EnsemblBacteria" id="BAC48662">
    <property type="protein sequence ID" value="BAC48662"/>
    <property type="gene ID" value="BAC48662"/>
</dbReference>
<dbReference type="GeneID" id="46490430"/>
<dbReference type="KEGG" id="bja:blr3397"/>
<dbReference type="PATRIC" id="fig|224911.44.peg.3047"/>
<dbReference type="eggNOG" id="COG0388">
    <property type="taxonomic scope" value="Bacteria"/>
</dbReference>
<dbReference type="HOGENOM" id="CLU_030130_6_1_5"/>
<dbReference type="InParanoid" id="Q89PT3"/>
<dbReference type="OrthoDB" id="9803803at2"/>
<dbReference type="PhylomeDB" id="Q89PT3"/>
<dbReference type="Proteomes" id="UP000002526">
    <property type="component" value="Chromosome"/>
</dbReference>
<dbReference type="GO" id="GO:0018762">
    <property type="term" value="F:aliphatic nitrilase activity"/>
    <property type="evidence" value="ECO:0000314"/>
    <property type="project" value="UniProtKB"/>
</dbReference>
<dbReference type="GO" id="GO:0000257">
    <property type="term" value="F:nitrilase activity"/>
    <property type="evidence" value="ECO:0000318"/>
    <property type="project" value="GO_Central"/>
</dbReference>
<dbReference type="GO" id="GO:0018822">
    <property type="term" value="F:nitrile hydratase activity"/>
    <property type="evidence" value="ECO:0000318"/>
    <property type="project" value="GO_Central"/>
</dbReference>
<dbReference type="GO" id="GO:0051410">
    <property type="term" value="P:detoxification of nitrogen compound"/>
    <property type="evidence" value="ECO:0000318"/>
    <property type="project" value="GO_Central"/>
</dbReference>
<dbReference type="GO" id="GO:0051260">
    <property type="term" value="P:protein homooligomerization"/>
    <property type="evidence" value="ECO:0000314"/>
    <property type="project" value="UniProtKB"/>
</dbReference>
<dbReference type="CDD" id="cd07564">
    <property type="entry name" value="nitrilases_CHs"/>
    <property type="match status" value="1"/>
</dbReference>
<dbReference type="FunFam" id="3.60.110.10:FF:000016">
    <property type="entry name" value="Nitrilase blr3397"/>
    <property type="match status" value="1"/>
</dbReference>
<dbReference type="Gene3D" id="3.60.110.10">
    <property type="entry name" value="Carbon-nitrogen hydrolase"/>
    <property type="match status" value="1"/>
</dbReference>
<dbReference type="InterPro" id="IPR003010">
    <property type="entry name" value="C-N_Hydrolase"/>
</dbReference>
<dbReference type="InterPro" id="IPR036526">
    <property type="entry name" value="C-N_Hydrolase_sf"/>
</dbReference>
<dbReference type="InterPro" id="IPR000132">
    <property type="entry name" value="Nitrilase/CN_hydratase_CS"/>
</dbReference>
<dbReference type="InterPro" id="IPR044149">
    <property type="entry name" value="Nitrilases_CHs"/>
</dbReference>
<dbReference type="PANTHER" id="PTHR46044:SF1">
    <property type="entry name" value="CN HYDROLASE DOMAIN-CONTAINING PROTEIN"/>
    <property type="match status" value="1"/>
</dbReference>
<dbReference type="PANTHER" id="PTHR46044">
    <property type="entry name" value="NITRILASE"/>
    <property type="match status" value="1"/>
</dbReference>
<dbReference type="Pfam" id="PF00795">
    <property type="entry name" value="CN_hydrolase"/>
    <property type="match status" value="1"/>
</dbReference>
<dbReference type="SUPFAM" id="SSF56317">
    <property type="entry name" value="Carbon-nitrogen hydrolase"/>
    <property type="match status" value="1"/>
</dbReference>
<dbReference type="PROSITE" id="PS50263">
    <property type="entry name" value="CN_HYDROLASE"/>
    <property type="match status" value="1"/>
</dbReference>
<dbReference type="PROSITE" id="PS00920">
    <property type="entry name" value="NITRIL_CHT_1"/>
    <property type="match status" value="1"/>
</dbReference>
<dbReference type="PROSITE" id="PS00921">
    <property type="entry name" value="NITRIL_CHT_2"/>
    <property type="match status" value="1"/>
</dbReference>
<evidence type="ECO:0000255" key="1">
    <source>
        <dbReference type="PROSITE-ProRule" id="PRU00054"/>
    </source>
</evidence>
<evidence type="ECO:0000255" key="2">
    <source>
        <dbReference type="PROSITE-ProRule" id="PRU10105"/>
    </source>
</evidence>
<evidence type="ECO:0000269" key="3">
    <source>
    </source>
</evidence>
<evidence type="ECO:0000305" key="4"/>
<gene>
    <name type="ordered locus">blr3397</name>
</gene>
<name>NITR2_BRADU</name>
<reference key="1">
    <citation type="journal article" date="2002" name="DNA Res.">
        <title>Complete genomic sequence of nitrogen-fixing symbiotic bacterium Bradyrhizobium japonicum USDA110.</title>
        <authorList>
            <person name="Kaneko T."/>
            <person name="Nakamura Y."/>
            <person name="Sato S."/>
            <person name="Minamisawa K."/>
            <person name="Uchiumi T."/>
            <person name="Sasamoto S."/>
            <person name="Watanabe A."/>
            <person name="Idesawa K."/>
            <person name="Iriguchi M."/>
            <person name="Kawashima K."/>
            <person name="Kohara M."/>
            <person name="Matsumoto M."/>
            <person name="Shimpo S."/>
            <person name="Tsuruoka H."/>
            <person name="Wada T."/>
            <person name="Yamada M."/>
            <person name="Tabata S."/>
        </authorList>
    </citation>
    <scope>NUCLEOTIDE SEQUENCE [LARGE SCALE GENOMIC DNA]</scope>
    <source>
        <strain>JCM 10833 / BCRC 13528 / IAM 13628 / NBRC 14792 / USDA 110</strain>
    </source>
</reference>
<reference key="2">
    <citation type="journal article" date="2008" name="J. Biotechnol.">
        <title>A new nitrilase from Bradyrhizobium japonicum USDA 110. Gene cloning, biochemical characterization and substrate specificity.</title>
        <authorList>
            <person name="Zhu D."/>
            <person name="Mukherjee C."/>
            <person name="Yang Y."/>
            <person name="Rios B.E."/>
            <person name="Gallagher D.T."/>
            <person name="Smith N.N."/>
            <person name="Biehl E.R."/>
            <person name="Hua L."/>
        </authorList>
    </citation>
    <scope>FUNCTION</scope>
    <scope>CATALYTIC ACTIVITY</scope>
    <scope>BIOPHYSICOCHEMICAL PROPERTIES</scope>
    <scope>SUBUNIT</scope>
    <source>
        <strain>JCM 10833 / BCRC 13528 / IAM 13628 / NBRC 14792 / USDA 110</strain>
    </source>
</reference>
<sequence length="321" mass="34475">MMDSNRPNTYKAAVVQAASDPTSSLVSAQKAAALIEKAAGAGARLVVFPEAFIGGYPKGNSFGAPVGMRKPEGREAFRLYWEAAIDLDGVEVETIAAAAAATGAFTVIGCIEREQGTLYCTALFFDGARGLVGKHRKLMPTAGERLIWGFGDGSTMPVFETSLGNIGAVICWENYMPMLRMHMYSQGISIYCAPTADDRDTWLPTMQHIALEGRCFVLTACQHLKRGAFPADYECALGADPETVLMRGGSAIVNPLGKVLAGPCFEGETILYADIALDEVTRGKFDFDAAGHYSRPDVFQLVVDDRPKRAVSTVSAVRARN</sequence>
<protein>
    <recommendedName>
        <fullName>Nitrilase blr3397</fullName>
        <ecNumber>3.5.5.7</ecNumber>
    </recommendedName>
</protein>
<comment type="function">
    <text evidence="3">Nitrilase that acts on various kinds of nitrile compounds such as aliphatic and aromatic nitriles. Has higher activity toward aliphatic nitriles compared to aromatic nitriles. Among the different substrates tested, has the highest activity toward hydrocinnamonitrile.</text>
</comment>
<comment type="catalytic activity">
    <reaction evidence="3">
        <text>an aliphatic nitrile + 2 H2O = a carboxylate + NH4(+)</text>
        <dbReference type="Rhea" id="RHEA:46188"/>
        <dbReference type="ChEBI" id="CHEBI:15377"/>
        <dbReference type="ChEBI" id="CHEBI:28938"/>
        <dbReference type="ChEBI" id="CHEBI:29067"/>
        <dbReference type="ChEBI" id="CHEBI:80291"/>
        <dbReference type="EC" id="3.5.5.7"/>
    </reaction>
</comment>
<comment type="biophysicochemical properties">
    <kinetics>
        <KM evidence="3">4.36 mM for phenylacetonitrile</KM>
        <text>kcat is 111 min(-1) with phenylacetonitrile.</text>
    </kinetics>
    <phDependence>
        <text evidence="3">Optimum pH is 7.0-8-0.</text>
    </phDependence>
    <temperatureDependence>
        <text evidence="3">Optimum temperature is 45 degrees Celsius.</text>
    </temperatureDependence>
</comment>
<comment type="subunit">
    <text evidence="3">Homodecamer.</text>
</comment>
<comment type="similarity">
    <text evidence="4">Belongs to the carbon-nitrogen hydrolase superfamily. Nitrilase family.</text>
</comment>
<keyword id="KW-0378">Hydrolase</keyword>
<keyword id="KW-1185">Reference proteome</keyword>
<feature type="chain" id="PRO_0000422217" description="Nitrilase blr3397">
    <location>
        <begin position="1"/>
        <end position="321"/>
    </location>
</feature>
<feature type="domain" description="CN hydrolase" evidence="1">
    <location>
        <begin position="10"/>
        <end position="277"/>
    </location>
</feature>
<feature type="active site" description="Proton acceptor" evidence="1">
    <location>
        <position position="50"/>
    </location>
</feature>
<feature type="active site" description="Proton donor" evidence="1">
    <location>
        <position position="137"/>
    </location>
</feature>
<feature type="active site" description="Nucleophile" evidence="1 2">
    <location>
        <position position="171"/>
    </location>
</feature>
<proteinExistence type="evidence at protein level"/>
<organism>
    <name type="scientific">Bradyrhizobium diazoefficiens (strain JCM 10833 / BCRC 13528 / IAM 13628 / NBRC 14792 / USDA 110)</name>
    <dbReference type="NCBI Taxonomy" id="224911"/>
    <lineage>
        <taxon>Bacteria</taxon>
        <taxon>Pseudomonadati</taxon>
        <taxon>Pseudomonadota</taxon>
        <taxon>Alphaproteobacteria</taxon>
        <taxon>Hyphomicrobiales</taxon>
        <taxon>Nitrobacteraceae</taxon>
        <taxon>Bradyrhizobium</taxon>
    </lineage>
</organism>